<proteinExistence type="evidence at protein level"/>
<keyword id="KW-0007">Acetylation</keyword>
<keyword id="KW-0025">Alternative splicing</keyword>
<keyword id="KW-0488">Methylation</keyword>
<keyword id="KW-0539">Nucleus</keyword>
<keyword id="KW-0597">Phosphoprotein</keyword>
<keyword id="KW-1267">Proteomics identification</keyword>
<keyword id="KW-1185">Reference proteome</keyword>
<keyword id="KW-0677">Repeat</keyword>
<keyword id="KW-0853">WD repeat</keyword>
<protein>
    <recommendedName>
        <fullName>WD repeat-containing protein 13</fullName>
    </recommendedName>
</protein>
<gene>
    <name type="primary">WDR13</name>
</gene>
<sequence length="485" mass="53715">MAAVWQQVLAVDARYNAYRTPTFPQFRTQYIRRRSQLLRENAKAGHPPALRRQYLRLRGQLLGQRYGPLSEPGSARAYSNSIVRSSRTTLDRMEDFEDDPRALGARGHRRSVSRGSYQLQAQMNRAVYEDRPPGSVVPTSAAEASRAMAGDTSLSENYAFAGMYHVFDQHVDEAVPRVRFANDDRHRLACCSLDGSISLCQLVPAPPTVLRVLRGHTRGVSDFAWSLSNDILVSTSLDATMRIWASEDGRCIREIPDPDSAELLCCTFQPVNNNLTVVGNAKHNVHVMNISTGKKVKGGSSKLTGRVLALSFDAPGRLLWAGDDRGSVFSFLFDMATGKLTKAKRLVVHEGSPVTSISARSWVSREARDPSLLINACLNKLLLYRVVDNEGTLQLKRSFPIEQSSHPVRSIFCPLMSFRQGACVVTGSEDMCVHFFDVERAAKAAVNKLQGHSAPVLDVSFNCDESLLASSDASGMVIVWRREQK</sequence>
<dbReference type="EMBL" id="AF329819">
    <property type="protein sequence ID" value="AAG47845.3"/>
    <property type="molecule type" value="mRNA"/>
</dbReference>
<dbReference type="EMBL" id="DQ907252">
    <property type="protein sequence ID" value="ABI93266.1"/>
    <property type="molecule type" value="mRNA"/>
</dbReference>
<dbReference type="EMBL" id="DQ907253">
    <property type="protein sequence ID" value="ABI93267.1"/>
    <property type="molecule type" value="mRNA"/>
</dbReference>
<dbReference type="EMBL" id="DQ907255">
    <property type="protein sequence ID" value="ABI93269.1"/>
    <property type="molecule type" value="mRNA"/>
</dbReference>
<dbReference type="EMBL" id="AF149817">
    <property type="protein sequence ID" value="AAK13247.1"/>
    <property type="molecule type" value="Genomic_DNA"/>
</dbReference>
<dbReference type="EMBL" id="AC115618">
    <property type="status" value="NOT_ANNOTATED_CDS"/>
    <property type="molecule type" value="Genomic_DNA"/>
</dbReference>
<dbReference type="EMBL" id="CH471224">
    <property type="protein sequence ID" value="EAW50760.1"/>
    <property type="molecule type" value="Genomic_DNA"/>
</dbReference>
<dbReference type="EMBL" id="BC002507">
    <property type="protein sequence ID" value="AAH02507.2"/>
    <property type="molecule type" value="mRNA"/>
</dbReference>
<dbReference type="EMBL" id="BC080579">
    <property type="protein sequence ID" value="AAH80579.1"/>
    <property type="molecule type" value="mRNA"/>
</dbReference>
<dbReference type="EMBL" id="AK000570">
    <property type="protein sequence ID" value="BAA91261.1"/>
    <property type="status" value="ALT_INIT"/>
    <property type="molecule type" value="mRNA"/>
</dbReference>
<dbReference type="CCDS" id="CCDS14302.1">
    <molecule id="Q9H1Z4-1"/>
</dbReference>
<dbReference type="RefSeq" id="NP_001159898.1">
    <molecule id="Q9H1Z4-2"/>
    <property type="nucleotide sequence ID" value="NM_001166426.3"/>
</dbReference>
<dbReference type="RefSeq" id="NP_001334146.1">
    <molecule id="Q9H1Z4-1"/>
    <property type="nucleotide sequence ID" value="NM_001347217.2"/>
</dbReference>
<dbReference type="RefSeq" id="NP_001334148.1">
    <molecule id="Q9H1Z4-2"/>
    <property type="nucleotide sequence ID" value="NM_001347219.2"/>
</dbReference>
<dbReference type="RefSeq" id="NP_060353.2">
    <molecule id="Q9H1Z4-1"/>
    <property type="nucleotide sequence ID" value="NM_017883.5"/>
</dbReference>
<dbReference type="RefSeq" id="XP_011542249.1">
    <property type="nucleotide sequence ID" value="XM_011543947.2"/>
</dbReference>
<dbReference type="SMR" id="Q9H1Z4"/>
<dbReference type="BioGRID" id="122259">
    <property type="interactions" value="23"/>
</dbReference>
<dbReference type="FunCoup" id="Q9H1Z4">
    <property type="interactions" value="1005"/>
</dbReference>
<dbReference type="IntAct" id="Q9H1Z4">
    <property type="interactions" value="12"/>
</dbReference>
<dbReference type="MINT" id="Q9H1Z4"/>
<dbReference type="STRING" id="9606.ENSP00000365919"/>
<dbReference type="GlyCosmos" id="Q9H1Z4">
    <property type="glycosylation" value="1 site, 1 glycan"/>
</dbReference>
<dbReference type="GlyGen" id="Q9H1Z4">
    <property type="glycosylation" value="2 sites, 1 O-linked glycan (1 site)"/>
</dbReference>
<dbReference type="iPTMnet" id="Q9H1Z4"/>
<dbReference type="PhosphoSitePlus" id="Q9H1Z4"/>
<dbReference type="BioMuta" id="WDR13"/>
<dbReference type="DMDM" id="296453034"/>
<dbReference type="jPOST" id="Q9H1Z4"/>
<dbReference type="MassIVE" id="Q9H1Z4"/>
<dbReference type="PaxDb" id="9606-ENSP00000365919"/>
<dbReference type="PeptideAtlas" id="Q9H1Z4"/>
<dbReference type="ProteomicsDB" id="80460">
    <molecule id="Q9H1Z4-1"/>
</dbReference>
<dbReference type="Pumba" id="Q9H1Z4"/>
<dbReference type="Antibodypedia" id="366">
    <property type="antibodies" value="62 antibodies from 23 providers"/>
</dbReference>
<dbReference type="DNASU" id="64743"/>
<dbReference type="Ensembl" id="ENST00000218056.9">
    <molecule id="Q9H1Z4-1"/>
    <property type="protein sequence ID" value="ENSP00000218056.5"/>
    <property type="gene ID" value="ENSG00000101940.18"/>
</dbReference>
<dbReference type="Ensembl" id="ENST00000376729.10">
    <molecule id="Q9H1Z4-1"/>
    <property type="protein sequence ID" value="ENSP00000365919.5"/>
    <property type="gene ID" value="ENSG00000101940.18"/>
</dbReference>
<dbReference type="GeneID" id="64743"/>
<dbReference type="KEGG" id="hsa:64743"/>
<dbReference type="MANE-Select" id="ENST00000376729.10">
    <property type="protein sequence ID" value="ENSP00000365919.5"/>
    <property type="RefSeq nucleotide sequence ID" value="NM_001347217.2"/>
    <property type="RefSeq protein sequence ID" value="NP_001334146.1"/>
</dbReference>
<dbReference type="UCSC" id="uc004dkj.3">
    <molecule id="Q9H1Z4-1"/>
    <property type="organism name" value="human"/>
</dbReference>
<dbReference type="AGR" id="HGNC:14352"/>
<dbReference type="CTD" id="64743"/>
<dbReference type="DisGeNET" id="64743"/>
<dbReference type="GeneCards" id="WDR13"/>
<dbReference type="HGNC" id="HGNC:14352">
    <property type="gene designation" value="WDR13"/>
</dbReference>
<dbReference type="HPA" id="ENSG00000101940">
    <property type="expression patterns" value="Low tissue specificity"/>
</dbReference>
<dbReference type="MalaCards" id="WDR13"/>
<dbReference type="MIM" id="300512">
    <property type="type" value="gene"/>
</dbReference>
<dbReference type="neXtProt" id="NX_Q9H1Z4"/>
<dbReference type="OpenTargets" id="ENSG00000101940"/>
<dbReference type="PharmGKB" id="PA37876"/>
<dbReference type="VEuPathDB" id="HostDB:ENSG00000101940"/>
<dbReference type="eggNOG" id="KOG0266">
    <property type="taxonomic scope" value="Eukaryota"/>
</dbReference>
<dbReference type="GeneTree" id="ENSGT00940000153634"/>
<dbReference type="HOGENOM" id="CLU_026276_2_0_1"/>
<dbReference type="InParanoid" id="Q9H1Z4"/>
<dbReference type="OMA" id="MLKFANN"/>
<dbReference type="OrthoDB" id="1932312at2759"/>
<dbReference type="PAN-GO" id="Q9H1Z4">
    <property type="GO annotations" value="2 GO annotations based on evolutionary models"/>
</dbReference>
<dbReference type="PhylomeDB" id="Q9H1Z4"/>
<dbReference type="TreeFam" id="TF329058"/>
<dbReference type="PathwayCommons" id="Q9H1Z4"/>
<dbReference type="SignaLink" id="Q9H1Z4"/>
<dbReference type="BioGRID-ORCS" id="64743">
    <property type="hits" value="9 hits in 791 CRISPR screens"/>
</dbReference>
<dbReference type="ChiTaRS" id="WDR13">
    <property type="organism name" value="human"/>
</dbReference>
<dbReference type="GenomeRNAi" id="64743"/>
<dbReference type="Pharos" id="Q9H1Z4">
    <property type="development level" value="Tbio"/>
</dbReference>
<dbReference type="PRO" id="PR:Q9H1Z4"/>
<dbReference type="Proteomes" id="UP000005640">
    <property type="component" value="Chromosome X"/>
</dbReference>
<dbReference type="RNAct" id="Q9H1Z4">
    <property type="molecule type" value="protein"/>
</dbReference>
<dbReference type="Bgee" id="ENSG00000101940">
    <property type="expression patterns" value="Expressed in body of pancreas and 194 other cell types or tissues"/>
</dbReference>
<dbReference type="ExpressionAtlas" id="Q9H1Z4">
    <property type="expression patterns" value="baseline and differential"/>
</dbReference>
<dbReference type="GO" id="GO:0034451">
    <property type="term" value="C:centriolar satellite"/>
    <property type="evidence" value="ECO:0000314"/>
    <property type="project" value="HPA"/>
</dbReference>
<dbReference type="GO" id="GO:0005654">
    <property type="term" value="C:nucleoplasm"/>
    <property type="evidence" value="ECO:0000314"/>
    <property type="project" value="HPA"/>
</dbReference>
<dbReference type="GO" id="GO:0005886">
    <property type="term" value="C:plasma membrane"/>
    <property type="evidence" value="ECO:0000314"/>
    <property type="project" value="HPA"/>
</dbReference>
<dbReference type="GO" id="GO:1990841">
    <property type="term" value="F:promoter-specific chromatin binding"/>
    <property type="evidence" value="ECO:0007669"/>
    <property type="project" value="Ensembl"/>
</dbReference>
<dbReference type="GO" id="GO:1904691">
    <property type="term" value="P:negative regulation of type B pancreatic cell proliferation"/>
    <property type="evidence" value="ECO:0007669"/>
    <property type="project" value="Ensembl"/>
</dbReference>
<dbReference type="FunFam" id="2.130.10.10:FF:000382">
    <property type="entry name" value="WD repeat-containing protein 13"/>
    <property type="match status" value="1"/>
</dbReference>
<dbReference type="Gene3D" id="2.130.10.10">
    <property type="entry name" value="YVTN repeat-like/Quinoprotein amine dehydrogenase"/>
    <property type="match status" value="2"/>
</dbReference>
<dbReference type="InterPro" id="IPR015943">
    <property type="entry name" value="WD40/YVTN_repeat-like_dom_sf"/>
</dbReference>
<dbReference type="InterPro" id="IPR036322">
    <property type="entry name" value="WD40_repeat_dom_sf"/>
</dbReference>
<dbReference type="InterPro" id="IPR001680">
    <property type="entry name" value="WD40_rpt"/>
</dbReference>
<dbReference type="InterPro" id="IPR051350">
    <property type="entry name" value="WD_repeat-ST_regulator"/>
</dbReference>
<dbReference type="PANTHER" id="PTHR22838">
    <property type="entry name" value="WD REPEAT PROTEIN 26-RELATED"/>
    <property type="match status" value="1"/>
</dbReference>
<dbReference type="PANTHER" id="PTHR22838:SF4">
    <property type="entry name" value="WD REPEAT-CONTAINING PROTEIN 13"/>
    <property type="match status" value="1"/>
</dbReference>
<dbReference type="Pfam" id="PF00400">
    <property type="entry name" value="WD40"/>
    <property type="match status" value="2"/>
</dbReference>
<dbReference type="SMART" id="SM00320">
    <property type="entry name" value="WD40"/>
    <property type="match status" value="5"/>
</dbReference>
<dbReference type="SUPFAM" id="SSF50978">
    <property type="entry name" value="WD40 repeat-like"/>
    <property type="match status" value="1"/>
</dbReference>
<dbReference type="PROSITE" id="PS50082">
    <property type="entry name" value="WD_REPEATS_2"/>
    <property type="match status" value="2"/>
</dbReference>
<dbReference type="PROSITE" id="PS50294">
    <property type="entry name" value="WD_REPEATS_REGION"/>
    <property type="match status" value="2"/>
</dbReference>
<reference key="1">
    <citation type="journal article" date="2003" name="Genomics">
        <title>A highly conserved human gene encoding a novel member of WD-repeat family of proteins (WDR13).</title>
        <authorList>
            <person name="Singh B.N."/>
            <person name="Suresh A."/>
            <person name="UmaPrasad G."/>
            <person name="Subramanian S."/>
            <person name="Sultana M."/>
            <person name="Goel S."/>
            <person name="Kumar S."/>
            <person name="Singh L."/>
        </authorList>
    </citation>
    <scope>NUCLEOTIDE SEQUENCE [GENOMIC DNA / MRNA] (ISOFORMS 1 AND 2)</scope>
    <scope>SUBCELLULAR LOCATION</scope>
    <scope>ALTERNATIVE SPLICING</scope>
    <source>
        <tissue>Brain</tissue>
        <tissue>Stomach</tissue>
        <tissue>Testis</tissue>
    </source>
</reference>
<reference key="2">
    <citation type="journal article" date="2005" name="Nature">
        <title>The DNA sequence of the human X chromosome.</title>
        <authorList>
            <person name="Ross M.T."/>
            <person name="Grafham D.V."/>
            <person name="Coffey A.J."/>
            <person name="Scherer S."/>
            <person name="McLay K."/>
            <person name="Muzny D."/>
            <person name="Platzer M."/>
            <person name="Howell G.R."/>
            <person name="Burrows C."/>
            <person name="Bird C.P."/>
            <person name="Frankish A."/>
            <person name="Lovell F.L."/>
            <person name="Howe K.L."/>
            <person name="Ashurst J.L."/>
            <person name="Fulton R.S."/>
            <person name="Sudbrak R."/>
            <person name="Wen G."/>
            <person name="Jones M.C."/>
            <person name="Hurles M.E."/>
            <person name="Andrews T.D."/>
            <person name="Scott C.E."/>
            <person name="Searle S."/>
            <person name="Ramser J."/>
            <person name="Whittaker A."/>
            <person name="Deadman R."/>
            <person name="Carter N.P."/>
            <person name="Hunt S.E."/>
            <person name="Chen R."/>
            <person name="Cree A."/>
            <person name="Gunaratne P."/>
            <person name="Havlak P."/>
            <person name="Hodgson A."/>
            <person name="Metzker M.L."/>
            <person name="Richards S."/>
            <person name="Scott G."/>
            <person name="Steffen D."/>
            <person name="Sodergren E."/>
            <person name="Wheeler D.A."/>
            <person name="Worley K.C."/>
            <person name="Ainscough R."/>
            <person name="Ambrose K.D."/>
            <person name="Ansari-Lari M.A."/>
            <person name="Aradhya S."/>
            <person name="Ashwell R.I."/>
            <person name="Babbage A.K."/>
            <person name="Bagguley C.L."/>
            <person name="Ballabio A."/>
            <person name="Banerjee R."/>
            <person name="Barker G.E."/>
            <person name="Barlow K.F."/>
            <person name="Barrett I.P."/>
            <person name="Bates K.N."/>
            <person name="Beare D.M."/>
            <person name="Beasley H."/>
            <person name="Beasley O."/>
            <person name="Beck A."/>
            <person name="Bethel G."/>
            <person name="Blechschmidt K."/>
            <person name="Brady N."/>
            <person name="Bray-Allen S."/>
            <person name="Bridgeman A.M."/>
            <person name="Brown A.J."/>
            <person name="Brown M.J."/>
            <person name="Bonnin D."/>
            <person name="Bruford E.A."/>
            <person name="Buhay C."/>
            <person name="Burch P."/>
            <person name="Burford D."/>
            <person name="Burgess J."/>
            <person name="Burrill W."/>
            <person name="Burton J."/>
            <person name="Bye J.M."/>
            <person name="Carder C."/>
            <person name="Carrel L."/>
            <person name="Chako J."/>
            <person name="Chapman J.C."/>
            <person name="Chavez D."/>
            <person name="Chen E."/>
            <person name="Chen G."/>
            <person name="Chen Y."/>
            <person name="Chen Z."/>
            <person name="Chinault C."/>
            <person name="Ciccodicola A."/>
            <person name="Clark S.Y."/>
            <person name="Clarke G."/>
            <person name="Clee C.M."/>
            <person name="Clegg S."/>
            <person name="Clerc-Blankenburg K."/>
            <person name="Clifford K."/>
            <person name="Cobley V."/>
            <person name="Cole C.G."/>
            <person name="Conquer J.S."/>
            <person name="Corby N."/>
            <person name="Connor R.E."/>
            <person name="David R."/>
            <person name="Davies J."/>
            <person name="Davis C."/>
            <person name="Davis J."/>
            <person name="Delgado O."/>
            <person name="Deshazo D."/>
            <person name="Dhami P."/>
            <person name="Ding Y."/>
            <person name="Dinh H."/>
            <person name="Dodsworth S."/>
            <person name="Draper H."/>
            <person name="Dugan-Rocha S."/>
            <person name="Dunham A."/>
            <person name="Dunn M."/>
            <person name="Durbin K.J."/>
            <person name="Dutta I."/>
            <person name="Eades T."/>
            <person name="Ellwood M."/>
            <person name="Emery-Cohen A."/>
            <person name="Errington H."/>
            <person name="Evans K.L."/>
            <person name="Faulkner L."/>
            <person name="Francis F."/>
            <person name="Frankland J."/>
            <person name="Fraser A.E."/>
            <person name="Galgoczy P."/>
            <person name="Gilbert J."/>
            <person name="Gill R."/>
            <person name="Gloeckner G."/>
            <person name="Gregory S.G."/>
            <person name="Gribble S."/>
            <person name="Griffiths C."/>
            <person name="Grocock R."/>
            <person name="Gu Y."/>
            <person name="Gwilliam R."/>
            <person name="Hamilton C."/>
            <person name="Hart E.A."/>
            <person name="Hawes A."/>
            <person name="Heath P.D."/>
            <person name="Heitmann K."/>
            <person name="Hennig S."/>
            <person name="Hernandez J."/>
            <person name="Hinzmann B."/>
            <person name="Ho S."/>
            <person name="Hoffs M."/>
            <person name="Howden P.J."/>
            <person name="Huckle E.J."/>
            <person name="Hume J."/>
            <person name="Hunt P.J."/>
            <person name="Hunt A.R."/>
            <person name="Isherwood J."/>
            <person name="Jacob L."/>
            <person name="Johnson D."/>
            <person name="Jones S."/>
            <person name="de Jong P.J."/>
            <person name="Joseph S.S."/>
            <person name="Keenan S."/>
            <person name="Kelly S."/>
            <person name="Kershaw J.K."/>
            <person name="Khan Z."/>
            <person name="Kioschis P."/>
            <person name="Klages S."/>
            <person name="Knights A.J."/>
            <person name="Kosiura A."/>
            <person name="Kovar-Smith C."/>
            <person name="Laird G.K."/>
            <person name="Langford C."/>
            <person name="Lawlor S."/>
            <person name="Leversha M."/>
            <person name="Lewis L."/>
            <person name="Liu W."/>
            <person name="Lloyd C."/>
            <person name="Lloyd D.M."/>
            <person name="Loulseged H."/>
            <person name="Loveland J.E."/>
            <person name="Lovell J.D."/>
            <person name="Lozado R."/>
            <person name="Lu J."/>
            <person name="Lyne R."/>
            <person name="Ma J."/>
            <person name="Maheshwari M."/>
            <person name="Matthews L.H."/>
            <person name="McDowall J."/>
            <person name="McLaren S."/>
            <person name="McMurray A."/>
            <person name="Meidl P."/>
            <person name="Meitinger T."/>
            <person name="Milne S."/>
            <person name="Miner G."/>
            <person name="Mistry S.L."/>
            <person name="Morgan M."/>
            <person name="Morris S."/>
            <person name="Mueller I."/>
            <person name="Mullikin J.C."/>
            <person name="Nguyen N."/>
            <person name="Nordsiek G."/>
            <person name="Nyakatura G."/>
            <person name="O'dell C.N."/>
            <person name="Okwuonu G."/>
            <person name="Palmer S."/>
            <person name="Pandian R."/>
            <person name="Parker D."/>
            <person name="Parrish J."/>
            <person name="Pasternak S."/>
            <person name="Patel D."/>
            <person name="Pearce A.V."/>
            <person name="Pearson D.M."/>
            <person name="Pelan S.E."/>
            <person name="Perez L."/>
            <person name="Porter K.M."/>
            <person name="Ramsey Y."/>
            <person name="Reichwald K."/>
            <person name="Rhodes S."/>
            <person name="Ridler K.A."/>
            <person name="Schlessinger D."/>
            <person name="Schueler M.G."/>
            <person name="Sehra H.K."/>
            <person name="Shaw-Smith C."/>
            <person name="Shen H."/>
            <person name="Sheridan E.M."/>
            <person name="Shownkeen R."/>
            <person name="Skuce C.D."/>
            <person name="Smith M.L."/>
            <person name="Sotheran E.C."/>
            <person name="Steingruber H.E."/>
            <person name="Steward C.A."/>
            <person name="Storey R."/>
            <person name="Swann R.M."/>
            <person name="Swarbreck D."/>
            <person name="Tabor P.E."/>
            <person name="Taudien S."/>
            <person name="Taylor T."/>
            <person name="Teague B."/>
            <person name="Thomas K."/>
            <person name="Thorpe A."/>
            <person name="Timms K."/>
            <person name="Tracey A."/>
            <person name="Trevanion S."/>
            <person name="Tromans A.C."/>
            <person name="d'Urso M."/>
            <person name="Verduzco D."/>
            <person name="Villasana D."/>
            <person name="Waldron L."/>
            <person name="Wall M."/>
            <person name="Wang Q."/>
            <person name="Warren J."/>
            <person name="Warry G.L."/>
            <person name="Wei X."/>
            <person name="West A."/>
            <person name="Whitehead S.L."/>
            <person name="Whiteley M.N."/>
            <person name="Wilkinson J.E."/>
            <person name="Willey D.L."/>
            <person name="Williams G."/>
            <person name="Williams L."/>
            <person name="Williamson A."/>
            <person name="Williamson H."/>
            <person name="Wilming L."/>
            <person name="Woodmansey R.L."/>
            <person name="Wray P.W."/>
            <person name="Yen J."/>
            <person name="Zhang J."/>
            <person name="Zhou J."/>
            <person name="Zoghbi H."/>
            <person name="Zorilla S."/>
            <person name="Buck D."/>
            <person name="Reinhardt R."/>
            <person name="Poustka A."/>
            <person name="Rosenthal A."/>
            <person name="Lehrach H."/>
            <person name="Meindl A."/>
            <person name="Minx P.J."/>
            <person name="Hillier L.W."/>
            <person name="Willard H.F."/>
            <person name="Wilson R.K."/>
            <person name="Waterston R.H."/>
            <person name="Rice C.M."/>
            <person name="Vaudin M."/>
            <person name="Coulson A."/>
            <person name="Nelson D.L."/>
            <person name="Weinstock G."/>
            <person name="Sulston J.E."/>
            <person name="Durbin R.M."/>
            <person name="Hubbard T."/>
            <person name="Gibbs R.A."/>
            <person name="Beck S."/>
            <person name="Rogers J."/>
            <person name="Bentley D.R."/>
        </authorList>
    </citation>
    <scope>NUCLEOTIDE SEQUENCE [LARGE SCALE GENOMIC DNA]</scope>
</reference>
<reference key="3">
    <citation type="submission" date="2005-07" db="EMBL/GenBank/DDBJ databases">
        <authorList>
            <person name="Mural R.J."/>
            <person name="Istrail S."/>
            <person name="Sutton G.G."/>
            <person name="Florea L."/>
            <person name="Halpern A.L."/>
            <person name="Mobarry C.M."/>
            <person name="Lippert R."/>
            <person name="Walenz B."/>
            <person name="Shatkay H."/>
            <person name="Dew I."/>
            <person name="Miller J.R."/>
            <person name="Flanigan M.J."/>
            <person name="Edwards N.J."/>
            <person name="Bolanos R."/>
            <person name="Fasulo D."/>
            <person name="Halldorsson B.V."/>
            <person name="Hannenhalli S."/>
            <person name="Turner R."/>
            <person name="Yooseph S."/>
            <person name="Lu F."/>
            <person name="Nusskern D.R."/>
            <person name="Shue B.C."/>
            <person name="Zheng X.H."/>
            <person name="Zhong F."/>
            <person name="Delcher A.L."/>
            <person name="Huson D.H."/>
            <person name="Kravitz S.A."/>
            <person name="Mouchard L."/>
            <person name="Reinert K."/>
            <person name="Remington K.A."/>
            <person name="Clark A.G."/>
            <person name="Waterman M.S."/>
            <person name="Eichler E.E."/>
            <person name="Adams M.D."/>
            <person name="Hunkapiller M.W."/>
            <person name="Myers E.W."/>
            <person name="Venter J.C."/>
        </authorList>
    </citation>
    <scope>NUCLEOTIDE SEQUENCE [LARGE SCALE GENOMIC DNA]</scope>
</reference>
<reference key="4">
    <citation type="journal article" date="2004" name="Genome Res.">
        <title>The status, quality, and expansion of the NIH full-length cDNA project: the Mammalian Gene Collection (MGC).</title>
        <authorList>
            <consortium name="The MGC Project Team"/>
        </authorList>
    </citation>
    <scope>NUCLEOTIDE SEQUENCE [LARGE SCALE MRNA] (ISOFORM 1)</scope>
    <source>
        <tissue>Colon</tissue>
        <tissue>Ovary</tissue>
    </source>
</reference>
<reference key="5">
    <citation type="journal article" date="2004" name="Nat. Genet.">
        <title>Complete sequencing and characterization of 21,243 full-length human cDNAs.</title>
        <authorList>
            <person name="Ota T."/>
            <person name="Suzuki Y."/>
            <person name="Nishikawa T."/>
            <person name="Otsuki T."/>
            <person name="Sugiyama T."/>
            <person name="Irie R."/>
            <person name="Wakamatsu A."/>
            <person name="Hayashi K."/>
            <person name="Sato H."/>
            <person name="Nagai K."/>
            <person name="Kimura K."/>
            <person name="Makita H."/>
            <person name="Sekine M."/>
            <person name="Obayashi M."/>
            <person name="Nishi T."/>
            <person name="Shibahara T."/>
            <person name="Tanaka T."/>
            <person name="Ishii S."/>
            <person name="Yamamoto J."/>
            <person name="Saito K."/>
            <person name="Kawai Y."/>
            <person name="Isono Y."/>
            <person name="Nakamura Y."/>
            <person name="Nagahari K."/>
            <person name="Murakami K."/>
            <person name="Yasuda T."/>
            <person name="Iwayanagi T."/>
            <person name="Wagatsuma M."/>
            <person name="Shiratori A."/>
            <person name="Sudo H."/>
            <person name="Hosoiri T."/>
            <person name="Kaku Y."/>
            <person name="Kodaira H."/>
            <person name="Kondo H."/>
            <person name="Sugawara M."/>
            <person name="Takahashi M."/>
            <person name="Kanda K."/>
            <person name="Yokoi T."/>
            <person name="Furuya T."/>
            <person name="Kikkawa E."/>
            <person name="Omura Y."/>
            <person name="Abe K."/>
            <person name="Kamihara K."/>
            <person name="Katsuta N."/>
            <person name="Sato K."/>
            <person name="Tanikawa M."/>
            <person name="Yamazaki M."/>
            <person name="Ninomiya K."/>
            <person name="Ishibashi T."/>
            <person name="Yamashita H."/>
            <person name="Murakawa K."/>
            <person name="Fujimori K."/>
            <person name="Tanai H."/>
            <person name="Kimata M."/>
            <person name="Watanabe M."/>
            <person name="Hiraoka S."/>
            <person name="Chiba Y."/>
            <person name="Ishida S."/>
            <person name="Ono Y."/>
            <person name="Takiguchi S."/>
            <person name="Watanabe S."/>
            <person name="Yosida M."/>
            <person name="Hotuta T."/>
            <person name="Kusano J."/>
            <person name="Kanehori K."/>
            <person name="Takahashi-Fujii A."/>
            <person name="Hara H."/>
            <person name="Tanase T.-O."/>
            <person name="Nomura Y."/>
            <person name="Togiya S."/>
            <person name="Komai F."/>
            <person name="Hara R."/>
            <person name="Takeuchi K."/>
            <person name="Arita M."/>
            <person name="Imose N."/>
            <person name="Musashino K."/>
            <person name="Yuuki H."/>
            <person name="Oshima A."/>
            <person name="Sasaki N."/>
            <person name="Aotsuka S."/>
            <person name="Yoshikawa Y."/>
            <person name="Matsunawa H."/>
            <person name="Ichihara T."/>
            <person name="Shiohata N."/>
            <person name="Sano S."/>
            <person name="Moriya S."/>
            <person name="Momiyama H."/>
            <person name="Satoh N."/>
            <person name="Takami S."/>
            <person name="Terashima Y."/>
            <person name="Suzuki O."/>
            <person name="Nakagawa S."/>
            <person name="Senoh A."/>
            <person name="Mizoguchi H."/>
            <person name="Goto Y."/>
            <person name="Shimizu F."/>
            <person name="Wakebe H."/>
            <person name="Hishigaki H."/>
            <person name="Watanabe T."/>
            <person name="Sugiyama A."/>
            <person name="Takemoto M."/>
            <person name="Kawakami B."/>
            <person name="Yamazaki M."/>
            <person name="Watanabe K."/>
            <person name="Kumagai A."/>
            <person name="Itakura S."/>
            <person name="Fukuzumi Y."/>
            <person name="Fujimori Y."/>
            <person name="Komiyama M."/>
            <person name="Tashiro H."/>
            <person name="Tanigami A."/>
            <person name="Fujiwara T."/>
            <person name="Ono T."/>
            <person name="Yamada K."/>
            <person name="Fujii Y."/>
            <person name="Ozaki K."/>
            <person name="Hirao M."/>
            <person name="Ohmori Y."/>
            <person name="Kawabata A."/>
            <person name="Hikiji T."/>
            <person name="Kobatake N."/>
            <person name="Inagaki H."/>
            <person name="Ikema Y."/>
            <person name="Okamoto S."/>
            <person name="Okitani R."/>
            <person name="Kawakami T."/>
            <person name="Noguchi S."/>
            <person name="Itoh T."/>
            <person name="Shigeta K."/>
            <person name="Senba T."/>
            <person name="Matsumura K."/>
            <person name="Nakajima Y."/>
            <person name="Mizuno T."/>
            <person name="Morinaga M."/>
            <person name="Sasaki M."/>
            <person name="Togashi T."/>
            <person name="Oyama M."/>
            <person name="Hata H."/>
            <person name="Watanabe M."/>
            <person name="Komatsu T."/>
            <person name="Mizushima-Sugano J."/>
            <person name="Satoh T."/>
            <person name="Shirai Y."/>
            <person name="Takahashi Y."/>
            <person name="Nakagawa K."/>
            <person name="Okumura K."/>
            <person name="Nagase T."/>
            <person name="Nomura N."/>
            <person name="Kikuchi H."/>
            <person name="Masuho Y."/>
            <person name="Yamashita R."/>
            <person name="Nakai K."/>
            <person name="Yada T."/>
            <person name="Nakamura Y."/>
            <person name="Ohara O."/>
            <person name="Isogai T."/>
            <person name="Sugano S."/>
        </authorList>
    </citation>
    <scope>NUCLEOTIDE SEQUENCE [LARGE SCALE MRNA] OF 284-485 (ISOFORM 1/2)</scope>
</reference>
<reference key="6">
    <citation type="journal article" date="2008" name="Mol. Cell">
        <title>Kinase-selective enrichment enables quantitative phosphoproteomics of the kinome across the cell cycle.</title>
        <authorList>
            <person name="Daub H."/>
            <person name="Olsen J.V."/>
            <person name="Bairlein M."/>
            <person name="Gnad F."/>
            <person name="Oppermann F.S."/>
            <person name="Korner R."/>
            <person name="Greff Z."/>
            <person name="Keri G."/>
            <person name="Stemmann O."/>
            <person name="Mann M."/>
        </authorList>
    </citation>
    <scope>PHOSPHORYLATION [LARGE SCALE ANALYSIS] AT SER-70</scope>
    <scope>IDENTIFICATION BY MASS SPECTROMETRY [LARGE SCALE ANALYSIS]</scope>
    <source>
        <tissue>Cervix carcinoma</tissue>
    </source>
</reference>
<reference key="7">
    <citation type="journal article" date="2009" name="Sci. Signal.">
        <title>Quantitative phosphoproteomic analysis of T cell receptor signaling reveals system-wide modulation of protein-protein interactions.</title>
        <authorList>
            <person name="Mayya V."/>
            <person name="Lundgren D.H."/>
            <person name="Hwang S.-I."/>
            <person name="Rezaul K."/>
            <person name="Wu L."/>
            <person name="Eng J.K."/>
            <person name="Rodionov V."/>
            <person name="Han D.K."/>
        </authorList>
    </citation>
    <scope>IDENTIFICATION BY MASS SPECTROMETRY [LARGE SCALE ANALYSIS]</scope>
    <source>
        <tissue>Leukemic T-cell</tissue>
    </source>
</reference>
<reference key="8">
    <citation type="journal article" date="2012" name="Proc. Natl. Acad. Sci. U.S.A.">
        <title>N-terminal acetylome analyses and functional insights of the N-terminal acetyltransferase NatB.</title>
        <authorList>
            <person name="Van Damme P."/>
            <person name="Lasa M."/>
            <person name="Polevoda B."/>
            <person name="Gazquez C."/>
            <person name="Elosegui-Artola A."/>
            <person name="Kim D.S."/>
            <person name="De Juan-Pardo E."/>
            <person name="Demeyer K."/>
            <person name="Hole K."/>
            <person name="Larrea E."/>
            <person name="Timmerman E."/>
            <person name="Prieto J."/>
            <person name="Arnesen T."/>
            <person name="Sherman F."/>
            <person name="Gevaert K."/>
            <person name="Aldabe R."/>
        </authorList>
    </citation>
    <scope>ACETYLATION [LARGE SCALE ANALYSIS] AT MET-1 (ISOFORM 2)</scope>
    <scope>IDENTIFICATION BY MASS SPECTROMETRY [LARGE SCALE ANALYSIS]</scope>
</reference>
<reference key="9">
    <citation type="journal article" date="2013" name="J. Proteome Res.">
        <title>Toward a comprehensive characterization of a human cancer cell phosphoproteome.</title>
        <authorList>
            <person name="Zhou H."/>
            <person name="Di Palma S."/>
            <person name="Preisinger C."/>
            <person name="Peng M."/>
            <person name="Polat A.N."/>
            <person name="Heck A.J."/>
            <person name="Mohammed S."/>
        </authorList>
    </citation>
    <scope>PHOSPHORYLATION [LARGE SCALE ANALYSIS] AT SER-70; SER-74 AND SER-79</scope>
    <scope>IDENTIFICATION BY MASS SPECTROMETRY [LARGE SCALE ANALYSIS]</scope>
    <source>
        <tissue>Cervix carcinoma</tissue>
    </source>
</reference>
<reference key="10">
    <citation type="journal article" date="2014" name="Mol. Cell. Proteomics">
        <title>Immunoaffinity enrichment and mass spectrometry analysis of protein methylation.</title>
        <authorList>
            <person name="Guo A."/>
            <person name="Gu H."/>
            <person name="Zhou J."/>
            <person name="Mulhern D."/>
            <person name="Wang Y."/>
            <person name="Lee K.A."/>
            <person name="Yang V."/>
            <person name="Aguiar M."/>
            <person name="Kornhauser J."/>
            <person name="Jia X."/>
            <person name="Ren J."/>
            <person name="Beausoleil S.A."/>
            <person name="Silva J.C."/>
            <person name="Vemulapalli V."/>
            <person name="Bedford M.T."/>
            <person name="Comb M.J."/>
        </authorList>
    </citation>
    <scope>METHYLATION [LARGE SCALE ANALYSIS] AT ARG-114</scope>
    <scope>IDENTIFICATION BY MASS SPECTROMETRY [LARGE SCALE ANALYSIS]</scope>
    <source>
        <tissue>Colon carcinoma</tissue>
    </source>
</reference>
<evidence type="ECO:0000250" key="1">
    <source>
        <dbReference type="UniProtKB" id="Q91V09"/>
    </source>
</evidence>
<evidence type="ECO:0000269" key="2">
    <source>
    </source>
</evidence>
<evidence type="ECO:0000303" key="3">
    <source>
    </source>
</evidence>
<evidence type="ECO:0000305" key="4"/>
<evidence type="ECO:0007744" key="5">
    <source>
    </source>
</evidence>
<evidence type="ECO:0007744" key="6">
    <source>
    </source>
</evidence>
<evidence type="ECO:0007744" key="7">
    <source>
    </source>
</evidence>
<evidence type="ECO:0007744" key="8">
    <source>
    </source>
</evidence>
<comment type="subcellular location">
    <subcellularLocation>
        <location evidence="2">Nucleus</location>
    </subcellularLocation>
</comment>
<comment type="alternative products">
    <event type="alternative splicing"/>
    <isoform>
        <id>Q9H1Z4-1</id>
        <name>1</name>
        <sequence type="displayed"/>
    </isoform>
    <isoform>
        <id>Q9H1Z4-2</id>
        <name>2</name>
        <sequence type="described" ref="VSP_054010"/>
    </isoform>
</comment>
<comment type="tissue specificity">
    <text>Widely expressed.</text>
</comment>
<comment type="sequence caution" evidence="4">
    <conflict type="erroneous initiation">
        <sequence resource="EMBL-CDS" id="BAA91261"/>
    </conflict>
</comment>
<feature type="chain" id="PRO_0000051361" description="WD repeat-containing protein 13">
    <location>
        <begin position="1"/>
        <end position="485"/>
    </location>
</feature>
<feature type="repeat" description="WD 1">
    <location>
        <begin position="162"/>
        <end position="202"/>
    </location>
</feature>
<feature type="repeat" description="WD 2">
    <location>
        <begin position="208"/>
        <end position="246"/>
    </location>
</feature>
<feature type="repeat" description="WD 3">
    <location>
        <begin position="250"/>
        <end position="290"/>
    </location>
</feature>
<feature type="repeat" description="WD 4">
    <location>
        <begin position="295"/>
        <end position="335"/>
    </location>
</feature>
<feature type="repeat" description="WD 5">
    <location>
        <begin position="341"/>
        <end position="389"/>
    </location>
</feature>
<feature type="repeat" description="WD 6">
    <location>
        <begin position="394"/>
        <end position="438"/>
    </location>
</feature>
<feature type="repeat" description="WD 7">
    <location>
        <begin position="444"/>
        <end position="482"/>
    </location>
</feature>
<feature type="modified residue" description="Phosphoserine" evidence="5 7">
    <location>
        <position position="70"/>
    </location>
</feature>
<feature type="modified residue" description="Phosphoserine" evidence="7">
    <location>
        <position position="74"/>
    </location>
</feature>
<feature type="modified residue" description="Phosphoserine" evidence="7">
    <location>
        <position position="79"/>
    </location>
</feature>
<feature type="modified residue" description="Asymmetric dimethylarginine; alternate" evidence="1">
    <location>
        <position position="114"/>
    </location>
</feature>
<feature type="modified residue" description="Omega-N-methylarginine; alternate" evidence="8">
    <location>
        <position position="114"/>
    </location>
</feature>
<feature type="splice variant" id="VSP_054010" description="In isoform 2." evidence="3">
    <location>
        <begin position="1"/>
        <end position="92"/>
    </location>
</feature>
<feature type="sequence variant" id="VAR_060284" description="In dbSNP:rs235842.">
    <original>R</original>
    <variation>H</variation>
    <location>
        <position position="325"/>
    </location>
</feature>
<feature type="sequence conflict" description="In Ref. 4; BAA91261." evidence="4" ref="4">
    <original>P</original>
    <variation>L</variation>
    <location>
        <position position="353"/>
    </location>
</feature>
<feature type="modified residue" description="N-acetylmethionine" evidence="6">
    <location sequence="Q9H1Z4-2">
        <position position="1"/>
    </location>
</feature>
<accession>Q9H1Z4</accession>
<accession>Q06DW8</accession>
<accession>Q06DX0</accession>
<accession>Q06DX1</accession>
<accession>Q9BUL7</accession>
<accession>Q9NWW4</accession>
<organism>
    <name type="scientific">Homo sapiens</name>
    <name type="common">Human</name>
    <dbReference type="NCBI Taxonomy" id="9606"/>
    <lineage>
        <taxon>Eukaryota</taxon>
        <taxon>Metazoa</taxon>
        <taxon>Chordata</taxon>
        <taxon>Craniata</taxon>
        <taxon>Vertebrata</taxon>
        <taxon>Euteleostomi</taxon>
        <taxon>Mammalia</taxon>
        <taxon>Eutheria</taxon>
        <taxon>Euarchontoglires</taxon>
        <taxon>Primates</taxon>
        <taxon>Haplorrhini</taxon>
        <taxon>Catarrhini</taxon>
        <taxon>Hominidae</taxon>
        <taxon>Homo</taxon>
    </lineage>
</organism>
<name>WDR13_HUMAN</name>